<keyword id="KW-0131">Cell cycle</keyword>
<keyword id="KW-0158">Chromosome</keyword>
<keyword id="KW-0227">DNA damage</keyword>
<keyword id="KW-0233">DNA recombination</keyword>
<keyword id="KW-0234">DNA repair</keyword>
<keyword id="KW-0238">DNA-binding</keyword>
<keyword id="KW-0469">Meiosis</keyword>
<keyword id="KW-0539">Nucleus</keyword>
<keyword id="KW-1185">Reference proteome</keyword>
<name>BRC2_CAEEL</name>
<reference evidence="9" key="1">
    <citation type="journal article" date="1998" name="Science">
        <title>Genome sequence of the nematode C. elegans: a platform for investigating biology.</title>
        <authorList>
            <consortium name="The C. elegans sequencing consortium"/>
        </authorList>
    </citation>
    <scope>NUCLEOTIDE SEQUENCE [LARGE SCALE GENOMIC DNA]</scope>
    <source>
        <strain evidence="9">Bristol N2</strain>
    </source>
</reference>
<reference evidence="8" key="2">
    <citation type="submission" date="2004-01" db="EMBL/GenBank/DDBJ databases">
        <title>The Caenorhabditis elegans transcriptome project, a complementary view of the genome.</title>
        <authorList>
            <person name="Kohara Y."/>
            <person name="Shin-i T."/>
            <person name="Suzuki Y."/>
            <person name="Sugano S."/>
            <person name="Thierry-Mieg D."/>
            <person name="Thierry-Mieg J."/>
        </authorList>
    </citation>
    <scope>NUCLEOTIDE SEQUENCE [LARGE SCALE MRNA]</scope>
</reference>
<reference evidence="7" key="3">
    <citation type="journal article" date="2005" name="Mol. Cell. Biol.">
        <title>RAD-51-dependent and -independent roles of a Caenorhabditis elegans BRCA2-related protein during DNA double-strand break repair.</title>
        <authorList>
            <person name="Martin J.S."/>
            <person name="Winkelmann N."/>
            <person name="Petalcorin M.I."/>
            <person name="McIlwraith M.J."/>
            <person name="Boulton S.J."/>
        </authorList>
    </citation>
    <scope>FUNCTION</scope>
    <scope>INTERACTION WITH RAD-51</scope>
    <scope>SUBCELLULAR LOCATION</scope>
    <scope>TISSUE SPECIFICITY</scope>
    <scope>DISRUPTION PHENOTYPE</scope>
    <scope>MUTAGENESIS OF 36-SER--ARG-42</scope>
</reference>
<reference evidence="7" key="4">
    <citation type="journal article" date="2006" name="J. Mol. Biol.">
        <title>CeBRC-2 stimulates D-loop formation by RAD-51 and promotes DNA single-strand annealing.</title>
        <authorList>
            <person name="Petalcorin M.I."/>
            <person name="Sandall J."/>
            <person name="Wigley D.B."/>
            <person name="Boulton S.J."/>
        </authorList>
    </citation>
    <scope>FUNCTION</scope>
    <scope>DOMAIN</scope>
    <scope>MUTAGENESIS OF PHE-35 AND ILE-43</scope>
</reference>
<reference evidence="7" key="5">
    <citation type="journal article" date="2007" name="Proc. Natl. Acad. Sci. U.S.A.">
        <title>Stabilization of RAD-51-DNA filaments via an interaction domain in Caenorhabditis elegans BRCA2.</title>
        <authorList>
            <person name="Petalcorin M.I."/>
            <person name="Galkin V.E."/>
            <person name="Yu X."/>
            <person name="Egelman E.H."/>
            <person name="Boulton S.J."/>
        </authorList>
    </citation>
    <scope>FUNCTION</scope>
    <scope>INTERACTION WITH RAD-51</scope>
    <scope>DOMAIN</scope>
</reference>
<reference evidence="7" key="6">
    <citation type="journal article" date="2008" name="Mol. Cells">
        <title>Essential role of brc-2 in chromosome integrity of germ cells in C. elegans.</title>
        <authorList>
            <person name="Ko E."/>
            <person name="Lee J."/>
            <person name="Lee H."/>
        </authorList>
    </citation>
    <scope>FUNCTION</scope>
    <scope>TISSUE SPECIFICITY</scope>
    <scope>DISRUPTION PHENOTYPE</scope>
</reference>
<reference evidence="7" key="7">
    <citation type="journal article" date="2016" name="FEBS Open Bio">
        <title>Paradoxical delay of senescence upon depletion of BRCA2 in telomerase-deficient worms.</title>
        <authorList>
            <person name="Kwon M.S."/>
            <person name="Min J."/>
            <person name="Jeon H.Y."/>
            <person name="Hwang K."/>
            <person name="Kim C."/>
            <person name="Lee J."/>
            <person name="Joung J.G."/>
            <person name="Park W.Y."/>
            <person name="Lee H."/>
        </authorList>
    </citation>
    <scope>FUNCTION</scope>
    <scope>DISRUPTION PHENOTYPE</scope>
</reference>
<sequence>MGDSSKKVKDSFDTISEPDSFDEPKGVPISMEPVFSTAAGIRIDVKQESIDKSKKMLNSDLKSKSSSKGGFSSPLVRKNNGSSAFVSPFRREGTSSTTTKRPASGGFEDFEAPPAKKSTSSSSKKSKKHSKKEKKKEFKEIHADVLRVSRIYEKDKFRIILQESSSTPLILATCSYNRGSDIKFGDRIHVDAEVCKKSSSGDVTEIYIDRVLKNKENGAKSGIRRHSIAKKPFCIKPRFIHELSDTKIKKTVVQVNLLDLNLDFYAGCSKCKHSLPEAANQCEFCKDSQGKSELSMYSRVRVMDFSGQMFINVTTKNMKKLLDLLGYEGFDNWFRFKDPQERQNYVFRPVMVEIEKSNDEWECTDVAEVDWKDFGSYLKHKEDKKKRRSKKKHP</sequence>
<comment type="function">
    <text evidence="2 3 4 5 6">Required for the homologous recombination repair of DNA double strand breaks, thereby playing a role in chromosome integrity (PubMed:15798199, PubMed:16843491). Acts by targeting rad-51 to sites of DNA damage and stabilizing rad-51-DNA filaments by blocking ATP hydrolysis catalyzed by rad-51 (PubMed:15798199, PubMed:16843491, PubMed:17483448, PubMed:18779660). Promotes rad-51 mediated displacement-loop (D-loop) formation during strand invasion between the invading single-stranded DNA (ssDNA) and the homologous duplex DNA (PubMed:16843491). Also functions independently of rad-51 in DNA double-strand break (DSB) repair by promoting DNA single-strand annealing (SSA) when the homologous recombination (HR) and non-homologous end joining (NHEJ) pathways are compromised (PubMed:15798199, PubMed:16843491). Binds selectively to single-stranded (ssDNA) via its C-terminus (PubMed:15798199). Involved in telomere maintenance and replicative senescence (PubMed:27761361).</text>
</comment>
<comment type="subunit">
    <text evidence="2 4">Interacts (via N-terminus) with rad-51; regulates rad-51 recruitment to sites of DNA double strand breaks (PubMed:15798199, PubMed:17483448).</text>
</comment>
<comment type="interaction">
    <interactant intactId="EBI-325989">
        <id>G5EG86</id>
    </interactant>
    <interactant intactId="EBI-2315986">
        <id>G5EGG8</id>
        <label>rad-51</label>
    </interactant>
    <organismsDiffer>false</organismsDiffer>
    <experiments>3</experiments>
</comment>
<comment type="subcellular location">
    <subcellularLocation>
        <location evidence="2">Nucleus</location>
    </subcellularLocation>
    <subcellularLocation>
        <location evidence="2">Chromosome</location>
    </subcellularLocation>
    <text evidence="2">Diffusely localized in the nucleus. Recruited to sites of DNA damage upon induction of DNA double strand breaks by ionizing radiation (IR) or in meiosis.</text>
</comment>
<comment type="tissue specificity">
    <text evidence="2 5">Expressed in the germline, with highest expression in cells undergoing oogenesis.</text>
</comment>
<comment type="domain">
    <text evidence="3 4">The BRCA2 repeat-like region is required for rad-51 binding.</text>
</comment>
<comment type="disruption phenotype">
    <text evidence="2 5 6">Mutant animals are egg-laying defective and exhibit a reduced brood size and high embryonic lethality (PubMed:15798199, PubMed:18779660). Impaired formation of rad-51 foci and accumulation of rpa-1 foci in the meiotic region of the germline in mutants either untreated or treated with ionizing radiation (IR), indicating impaired DNA double strand break repair by homologous recombination (PubMed:15798199, PubMed:18779660). Decompaction of chromatin, chromosome aggregation and aberrant number of bivalent chromosomes during meiosis (PubMed:15798199, PubMed:18779660). In a telomerase trt-1 mutant background, RNAi-mediated knockdown leads to telomere shortening in early generations, to telomere elongation in late generations and to a delay in generational replicative senescence (PubMed:27761361).</text>
</comment>
<organism evidence="9">
    <name type="scientific">Caenorhabditis elegans</name>
    <dbReference type="NCBI Taxonomy" id="6239"/>
    <lineage>
        <taxon>Eukaryota</taxon>
        <taxon>Metazoa</taxon>
        <taxon>Ecdysozoa</taxon>
        <taxon>Nematoda</taxon>
        <taxon>Chromadorea</taxon>
        <taxon>Rhabditida</taxon>
        <taxon>Rhabditina</taxon>
        <taxon>Rhabditomorpha</taxon>
        <taxon>Rhabditoidea</taxon>
        <taxon>Rhabditidae</taxon>
        <taxon>Peloderinae</taxon>
        <taxon>Caenorhabditis</taxon>
    </lineage>
</organism>
<feature type="chain" id="PRO_0000441095" description="DNA repair protein brc-2">
    <location>
        <begin position="1"/>
        <end position="394"/>
    </location>
</feature>
<feature type="region of interest" description="Interaction with rad-51" evidence="4">
    <location>
        <begin position="1"/>
        <end position="60"/>
    </location>
</feature>
<feature type="region of interest" description="Disordered" evidence="1">
    <location>
        <begin position="1"/>
        <end position="30"/>
    </location>
</feature>
<feature type="region of interest" description="BRCA2 repeat-like region" evidence="7">
    <location>
        <begin position="28"/>
        <end position="62"/>
    </location>
</feature>
<feature type="region of interest" description="Disordered" evidence="1">
    <location>
        <begin position="56"/>
        <end position="136"/>
    </location>
</feature>
<feature type="region of interest" description="Interaction with rad-51-DNA complexes" evidence="4">
    <location>
        <begin position="60"/>
        <end position="89"/>
    </location>
</feature>
<feature type="region of interest" description="Required for ssDNA binding" evidence="2">
    <location>
        <begin position="371"/>
        <end position="389"/>
    </location>
</feature>
<feature type="compositionally biased region" description="Basic and acidic residues" evidence="1">
    <location>
        <begin position="1"/>
        <end position="12"/>
    </location>
</feature>
<feature type="compositionally biased region" description="Low complexity" evidence="1">
    <location>
        <begin position="56"/>
        <end position="73"/>
    </location>
</feature>
<feature type="compositionally biased region" description="Basic residues" evidence="1">
    <location>
        <begin position="124"/>
        <end position="134"/>
    </location>
</feature>
<feature type="mutagenesis site" description="Abolishes interaction with rad-51, but binding to ssDNA is retained. Loss of D-loop formation in the presence of rad-51. Loss of inhibition of ATP hydrolysis by rad-51." evidence="3">
    <original>F</original>
    <variation>A</variation>
    <location>
        <position position="35"/>
    </location>
</feature>
<feature type="mutagenesis site" description="Abolishes interaction with rad-51." evidence="2">
    <location>
        <begin position="36"/>
        <end position="42"/>
    </location>
</feature>
<feature type="mutagenesis site" description="Abolishes interaction with rad-51, but binding to ssDNA is retained. Loss of D-loop formation in the presence of rad-51. Loss of inhibition of ATP hydrolysis by rad-51." evidence="3">
    <original>I</original>
    <variation>A</variation>
    <location>
        <position position="43"/>
    </location>
</feature>
<proteinExistence type="evidence at protein level"/>
<protein>
    <recommendedName>
        <fullName evidence="7">DNA repair protein brc-2</fullName>
    </recommendedName>
</protein>
<evidence type="ECO:0000256" key="1">
    <source>
        <dbReference type="SAM" id="MobiDB-lite"/>
    </source>
</evidence>
<evidence type="ECO:0000269" key="2">
    <source>
    </source>
</evidence>
<evidence type="ECO:0000269" key="3">
    <source>
    </source>
</evidence>
<evidence type="ECO:0000269" key="4">
    <source>
    </source>
</evidence>
<evidence type="ECO:0000269" key="5">
    <source>
    </source>
</evidence>
<evidence type="ECO:0000269" key="6">
    <source>
    </source>
</evidence>
<evidence type="ECO:0000305" key="7"/>
<evidence type="ECO:0000312" key="8">
    <source>
        <dbReference type="EMBL" id="AAR98640.1"/>
    </source>
</evidence>
<evidence type="ECO:0000312" key="9">
    <source>
        <dbReference type="Proteomes" id="UP000001940"/>
    </source>
</evidence>
<evidence type="ECO:0000312" key="10">
    <source>
        <dbReference type="WormBase" id="T07E3.5"/>
    </source>
</evidence>
<dbReference type="EMBL" id="BX284603">
    <property type="protein sequence ID" value="CCD72025.1"/>
    <property type="molecule type" value="Genomic_DNA"/>
</dbReference>
<dbReference type="EMBL" id="AY523518">
    <property type="protein sequence ID" value="AAR98640.1"/>
    <property type="molecule type" value="mRNA"/>
</dbReference>
<dbReference type="PIR" id="A88492">
    <property type="entry name" value="A88492"/>
</dbReference>
<dbReference type="RefSeq" id="NP_498502.3">
    <property type="nucleotide sequence ID" value="NM_066101.5"/>
</dbReference>
<dbReference type="FunCoup" id="G5EG86">
    <property type="interactions" value="1637"/>
</dbReference>
<dbReference type="IntAct" id="G5EG86">
    <property type="interactions" value="5"/>
</dbReference>
<dbReference type="STRING" id="6239.T07E3.5.1"/>
<dbReference type="PaxDb" id="6239-T07E3.5"/>
<dbReference type="PeptideAtlas" id="G5EG86"/>
<dbReference type="EnsemblMetazoa" id="T07E3.5.1">
    <property type="protein sequence ID" value="T07E3.5.1"/>
    <property type="gene ID" value="WBGene00020316"/>
</dbReference>
<dbReference type="GeneID" id="175962"/>
<dbReference type="KEGG" id="cel:CELE_T07E3.5"/>
<dbReference type="AGR" id="WB:WBGene00020316"/>
<dbReference type="CTD" id="175962"/>
<dbReference type="WormBase" id="T07E3.5">
    <property type="protein sequence ID" value="CE32718"/>
    <property type="gene ID" value="WBGene00020316"/>
    <property type="gene designation" value="brc-2"/>
</dbReference>
<dbReference type="eggNOG" id="ENOG502T7RB">
    <property type="taxonomic scope" value="Eukaryota"/>
</dbReference>
<dbReference type="HOGENOM" id="CLU_685589_0_0_1"/>
<dbReference type="InParanoid" id="G5EG86"/>
<dbReference type="OMA" id="NERIMDS"/>
<dbReference type="OrthoDB" id="5808752at2759"/>
<dbReference type="PRO" id="PR:G5EG86"/>
<dbReference type="Proteomes" id="UP000001940">
    <property type="component" value="Chromosome III"/>
</dbReference>
<dbReference type="Bgee" id="WBGene00020316">
    <property type="expression patterns" value="Expressed in germ line (C elegans) and 4 other cell types or tissues"/>
</dbReference>
<dbReference type="GO" id="GO:0000794">
    <property type="term" value="C:condensed nuclear chromosome"/>
    <property type="evidence" value="ECO:0000314"/>
    <property type="project" value="WormBase"/>
</dbReference>
<dbReference type="GO" id="GO:0005634">
    <property type="term" value="C:nucleus"/>
    <property type="evidence" value="ECO:0000314"/>
    <property type="project" value="WormBase"/>
</dbReference>
<dbReference type="GO" id="GO:0003697">
    <property type="term" value="F:single-stranded DNA binding"/>
    <property type="evidence" value="ECO:0000314"/>
    <property type="project" value="WormBase"/>
</dbReference>
<dbReference type="GO" id="GO:0042148">
    <property type="term" value="P:DNA strand invasion"/>
    <property type="evidence" value="ECO:0000314"/>
    <property type="project" value="WormBase"/>
</dbReference>
<dbReference type="GO" id="GO:0006302">
    <property type="term" value="P:double-strand break repair"/>
    <property type="evidence" value="ECO:0000315"/>
    <property type="project" value="WormBase"/>
</dbReference>
<dbReference type="GO" id="GO:0000724">
    <property type="term" value="P:double-strand break repair via homologous recombination"/>
    <property type="evidence" value="ECO:0000315"/>
    <property type="project" value="WormBase"/>
</dbReference>
<dbReference type="GO" id="GO:0045002">
    <property type="term" value="P:double-strand break repair via single-strand annealing"/>
    <property type="evidence" value="ECO:0000314"/>
    <property type="project" value="WormBase"/>
</dbReference>
<dbReference type="GO" id="GO:0018991">
    <property type="term" value="P:egg-laying behavior"/>
    <property type="evidence" value="ECO:0000315"/>
    <property type="project" value="WormBase"/>
</dbReference>
<dbReference type="GO" id="GO:0009792">
    <property type="term" value="P:embryo development ending in birth or egg hatching"/>
    <property type="evidence" value="ECO:0000315"/>
    <property type="project" value="WormBase"/>
</dbReference>
<dbReference type="GO" id="GO:0000707">
    <property type="term" value="P:meiotic DNA recombinase assembly"/>
    <property type="evidence" value="ECO:0000315"/>
    <property type="project" value="WormBase"/>
</dbReference>
<dbReference type="GO" id="GO:0032880">
    <property type="term" value="P:regulation of protein localization"/>
    <property type="evidence" value="ECO:0000315"/>
    <property type="project" value="WormBase"/>
</dbReference>
<dbReference type="Gene3D" id="2.40.50.140">
    <property type="entry name" value="Nucleic acid-binding proteins"/>
    <property type="match status" value="1"/>
</dbReference>
<dbReference type="InterPro" id="IPR012340">
    <property type="entry name" value="NA-bd_OB-fold"/>
</dbReference>
<dbReference type="SUPFAM" id="SSF50249">
    <property type="entry name" value="Nucleic acid-binding proteins"/>
    <property type="match status" value="1"/>
</dbReference>
<accession>G5EG86</accession>
<gene>
    <name evidence="10" type="primary">brc-2</name>
    <name evidence="10" type="ORF">T07E3.5</name>
</gene>